<accession>B7J3S7</accession>
<proteinExistence type="inferred from homology"/>
<gene>
    <name evidence="1" type="primary">anmK</name>
    <name type="ordered locus">AFE_0181</name>
</gene>
<keyword id="KW-0067">ATP-binding</keyword>
<keyword id="KW-0119">Carbohydrate metabolism</keyword>
<keyword id="KW-0418">Kinase</keyword>
<keyword id="KW-0547">Nucleotide-binding</keyword>
<keyword id="KW-1185">Reference proteome</keyword>
<keyword id="KW-0808">Transferase</keyword>
<reference key="1">
    <citation type="journal article" date="2008" name="BMC Genomics">
        <title>Acidithiobacillus ferrooxidans metabolism: from genome sequence to industrial applications.</title>
        <authorList>
            <person name="Valdes J."/>
            <person name="Pedroso I."/>
            <person name="Quatrini R."/>
            <person name="Dodson R.J."/>
            <person name="Tettelin H."/>
            <person name="Blake R. II"/>
            <person name="Eisen J.A."/>
            <person name="Holmes D.S."/>
        </authorList>
    </citation>
    <scope>NUCLEOTIDE SEQUENCE [LARGE SCALE GENOMIC DNA]</scope>
    <source>
        <strain>ATCC 23270 / DSM 14882 / CIP 104768 / NCIMB 8455</strain>
    </source>
</reference>
<evidence type="ECO:0000255" key="1">
    <source>
        <dbReference type="HAMAP-Rule" id="MF_01270"/>
    </source>
</evidence>
<organism>
    <name type="scientific">Acidithiobacillus ferrooxidans (strain ATCC 23270 / DSM 14882 / CIP 104768 / NCIMB 8455)</name>
    <name type="common">Ferrobacillus ferrooxidans (strain ATCC 23270)</name>
    <dbReference type="NCBI Taxonomy" id="243159"/>
    <lineage>
        <taxon>Bacteria</taxon>
        <taxon>Pseudomonadati</taxon>
        <taxon>Pseudomonadota</taxon>
        <taxon>Acidithiobacillia</taxon>
        <taxon>Acidithiobacillales</taxon>
        <taxon>Acidithiobacillaceae</taxon>
        <taxon>Acidithiobacillus</taxon>
    </lineage>
</organism>
<comment type="function">
    <text evidence="1">Catalyzes the specific phosphorylation of 1,6-anhydro-N-acetylmuramic acid (anhMurNAc) with the simultaneous cleavage of the 1,6-anhydro ring, generating MurNAc-6-P. Is required for the utilization of anhMurNAc either imported from the medium or derived from its own cell wall murein, and thus plays a role in cell wall recycling.</text>
</comment>
<comment type="catalytic activity">
    <reaction evidence="1">
        <text>1,6-anhydro-N-acetyl-beta-muramate + ATP + H2O = N-acetyl-D-muramate 6-phosphate + ADP + H(+)</text>
        <dbReference type="Rhea" id="RHEA:24952"/>
        <dbReference type="ChEBI" id="CHEBI:15377"/>
        <dbReference type="ChEBI" id="CHEBI:15378"/>
        <dbReference type="ChEBI" id="CHEBI:30616"/>
        <dbReference type="ChEBI" id="CHEBI:58690"/>
        <dbReference type="ChEBI" id="CHEBI:58722"/>
        <dbReference type="ChEBI" id="CHEBI:456216"/>
        <dbReference type="EC" id="2.7.1.170"/>
    </reaction>
</comment>
<comment type="pathway">
    <text evidence="1">Amino-sugar metabolism; 1,6-anhydro-N-acetylmuramate degradation.</text>
</comment>
<comment type="pathway">
    <text evidence="1">Cell wall biogenesis; peptidoglycan recycling.</text>
</comment>
<comment type="similarity">
    <text evidence="1">Belongs to the anhydro-N-acetylmuramic acid kinase family.</text>
</comment>
<name>ANMK_ACIF2</name>
<dbReference type="EC" id="2.7.1.170" evidence="1"/>
<dbReference type="EMBL" id="CP001219">
    <property type="protein sequence ID" value="ACK78866.1"/>
    <property type="molecule type" value="Genomic_DNA"/>
</dbReference>
<dbReference type="SMR" id="B7J3S7"/>
<dbReference type="STRING" id="243159.AFE_0181"/>
<dbReference type="PaxDb" id="243159-AFE_0181"/>
<dbReference type="KEGG" id="afr:AFE_0181"/>
<dbReference type="eggNOG" id="COG2377">
    <property type="taxonomic scope" value="Bacteria"/>
</dbReference>
<dbReference type="HOGENOM" id="CLU_038782_0_0_6"/>
<dbReference type="UniPathway" id="UPA00343"/>
<dbReference type="UniPathway" id="UPA00544"/>
<dbReference type="Proteomes" id="UP000001362">
    <property type="component" value="Chromosome"/>
</dbReference>
<dbReference type="GO" id="GO:0005524">
    <property type="term" value="F:ATP binding"/>
    <property type="evidence" value="ECO:0007669"/>
    <property type="project" value="UniProtKB-UniRule"/>
</dbReference>
<dbReference type="GO" id="GO:0016301">
    <property type="term" value="F:kinase activity"/>
    <property type="evidence" value="ECO:0007669"/>
    <property type="project" value="UniProtKB-KW"/>
</dbReference>
<dbReference type="GO" id="GO:0016773">
    <property type="term" value="F:phosphotransferase activity, alcohol group as acceptor"/>
    <property type="evidence" value="ECO:0007669"/>
    <property type="project" value="UniProtKB-UniRule"/>
</dbReference>
<dbReference type="GO" id="GO:0097175">
    <property type="term" value="P:1,6-anhydro-N-acetyl-beta-muramic acid catabolic process"/>
    <property type="evidence" value="ECO:0007669"/>
    <property type="project" value="UniProtKB-UniRule"/>
</dbReference>
<dbReference type="GO" id="GO:0006040">
    <property type="term" value="P:amino sugar metabolic process"/>
    <property type="evidence" value="ECO:0007669"/>
    <property type="project" value="InterPro"/>
</dbReference>
<dbReference type="GO" id="GO:0009254">
    <property type="term" value="P:peptidoglycan turnover"/>
    <property type="evidence" value="ECO:0007669"/>
    <property type="project" value="UniProtKB-UniRule"/>
</dbReference>
<dbReference type="Gene3D" id="3.30.420.40">
    <property type="match status" value="2"/>
</dbReference>
<dbReference type="HAMAP" id="MF_01270">
    <property type="entry name" value="AnhMurNAc_kinase"/>
    <property type="match status" value="1"/>
</dbReference>
<dbReference type="InterPro" id="IPR005338">
    <property type="entry name" value="Anhydro_N_Ac-Mur_kinase"/>
</dbReference>
<dbReference type="InterPro" id="IPR043129">
    <property type="entry name" value="ATPase_NBD"/>
</dbReference>
<dbReference type="NCBIfam" id="NF007147">
    <property type="entry name" value="PRK09585.3-1"/>
    <property type="match status" value="1"/>
</dbReference>
<dbReference type="PANTHER" id="PTHR30605">
    <property type="entry name" value="ANHYDRO-N-ACETYLMURAMIC ACID KINASE"/>
    <property type="match status" value="1"/>
</dbReference>
<dbReference type="PANTHER" id="PTHR30605:SF0">
    <property type="entry name" value="ANHYDRO-N-ACETYLMURAMIC ACID KINASE"/>
    <property type="match status" value="1"/>
</dbReference>
<dbReference type="Pfam" id="PF03702">
    <property type="entry name" value="AnmK"/>
    <property type="match status" value="1"/>
</dbReference>
<dbReference type="SUPFAM" id="SSF53067">
    <property type="entry name" value="Actin-like ATPase domain"/>
    <property type="match status" value="1"/>
</dbReference>
<sequence length="393" mass="41745">MRGLGLMSGTSADGVDAAVLDLAVAGCGGYRGVFTHAFEPALRTEVLAANGPLGVEAMAQLDRRLGACYARVAREAVDRLGPVDFIALHGQTIRHQPRGEPGFTLQIGAAADIAVATGLTVVHDFRRTDVAAGGEGAPLVPPFHQYCFQDEQPRLVLNLGGMANVTWLPGTGDPRPLLAFDCGPGNVLMDAAVELCSAGQATCDVDGRLAAAGQCDVVRLEEWLDHVFFRQAPPKSTGRETFGMPLVTRWWSSWRGSAADFLATLTALTAESVARAVRAWTPGAAEMLVFGGGAENQALMQALQDAMKETRVLHGGRHSGIPGQALEALAFAWLGSQCLLGKRLDLERVTGAQHPMILGNILPGDNWPDLLVQLSQQPEITAREGPYRALRSV</sequence>
<feature type="chain" id="PRO_1000165149" description="Anhydro-N-acetylmuramic acid kinase">
    <location>
        <begin position="1"/>
        <end position="393"/>
    </location>
</feature>
<feature type="binding site" evidence="1">
    <location>
        <begin position="9"/>
        <end position="16"/>
    </location>
    <ligand>
        <name>ATP</name>
        <dbReference type="ChEBI" id="CHEBI:30616"/>
    </ligand>
</feature>
<protein>
    <recommendedName>
        <fullName evidence="1">Anhydro-N-acetylmuramic acid kinase</fullName>
        <ecNumber evidence="1">2.7.1.170</ecNumber>
    </recommendedName>
    <alternativeName>
        <fullName evidence="1">AnhMurNAc kinase</fullName>
    </alternativeName>
</protein>